<protein>
    <recommendedName>
        <fullName evidence="1">Universal stress protein B</fullName>
    </recommendedName>
</protein>
<proteinExistence type="inferred from homology"/>
<feature type="chain" id="PRO_1000136913" description="Universal stress protein B">
    <location>
        <begin position="1"/>
        <end position="111"/>
    </location>
</feature>
<feature type="transmembrane region" description="Helical" evidence="1">
    <location>
        <begin position="1"/>
        <end position="21"/>
    </location>
</feature>
<feature type="transmembrane region" description="Helical" evidence="1">
    <location>
        <begin position="90"/>
        <end position="110"/>
    </location>
</feature>
<accession>B7M2Q4</accession>
<name>USPB_ECO8A</name>
<keyword id="KW-0997">Cell inner membrane</keyword>
<keyword id="KW-1003">Cell membrane</keyword>
<keyword id="KW-0472">Membrane</keyword>
<keyword id="KW-0812">Transmembrane</keyword>
<keyword id="KW-1133">Transmembrane helix</keyword>
<sequence>MISTVALFWALCVVCIVNMARYFSSLRALLVVLRNCDPLLYQYVDGGGFFTSHGQPNKQVRLVWYIYAQRYRDHHDDEFIRRCERVRRQFILTSALCGLVVVSLIALMIWH</sequence>
<dbReference type="EMBL" id="CU928160">
    <property type="protein sequence ID" value="CAR00436.1"/>
    <property type="molecule type" value="Genomic_DNA"/>
</dbReference>
<dbReference type="RefSeq" id="WP_000626187.1">
    <property type="nucleotide sequence ID" value="NC_011741.1"/>
</dbReference>
<dbReference type="SMR" id="B7M2Q4"/>
<dbReference type="GeneID" id="93778499"/>
<dbReference type="KEGG" id="ecr:ECIAI1_3638"/>
<dbReference type="HOGENOM" id="CLU_151816_0_0_6"/>
<dbReference type="GO" id="GO:0005886">
    <property type="term" value="C:plasma membrane"/>
    <property type="evidence" value="ECO:0007669"/>
    <property type="project" value="UniProtKB-SubCell"/>
</dbReference>
<dbReference type="HAMAP" id="MF_01088">
    <property type="entry name" value="UspB"/>
    <property type="match status" value="1"/>
</dbReference>
<dbReference type="InterPro" id="IPR019598">
    <property type="entry name" value="Universal_stress_protein_B"/>
</dbReference>
<dbReference type="NCBIfam" id="NF003435">
    <property type="entry name" value="PRK04960.1"/>
    <property type="match status" value="1"/>
</dbReference>
<dbReference type="Pfam" id="PF10625">
    <property type="entry name" value="UspB"/>
    <property type="match status" value="1"/>
</dbReference>
<gene>
    <name evidence="1" type="primary">uspB</name>
    <name type="ordered locus">ECIAI1_3638</name>
</gene>
<evidence type="ECO:0000255" key="1">
    <source>
        <dbReference type="HAMAP-Rule" id="MF_01088"/>
    </source>
</evidence>
<comment type="subcellular location">
    <subcellularLocation>
        <location evidence="1">Cell inner membrane</location>
        <topology evidence="1">Multi-pass membrane protein</topology>
    </subcellularLocation>
</comment>
<comment type="similarity">
    <text evidence="1">Belongs to the universal stress protein B family.</text>
</comment>
<organism>
    <name type="scientific">Escherichia coli O8 (strain IAI1)</name>
    <dbReference type="NCBI Taxonomy" id="585034"/>
    <lineage>
        <taxon>Bacteria</taxon>
        <taxon>Pseudomonadati</taxon>
        <taxon>Pseudomonadota</taxon>
        <taxon>Gammaproteobacteria</taxon>
        <taxon>Enterobacterales</taxon>
        <taxon>Enterobacteriaceae</taxon>
        <taxon>Escherichia</taxon>
    </lineage>
</organism>
<reference key="1">
    <citation type="journal article" date="2009" name="PLoS Genet.">
        <title>Organised genome dynamics in the Escherichia coli species results in highly diverse adaptive paths.</title>
        <authorList>
            <person name="Touchon M."/>
            <person name="Hoede C."/>
            <person name="Tenaillon O."/>
            <person name="Barbe V."/>
            <person name="Baeriswyl S."/>
            <person name="Bidet P."/>
            <person name="Bingen E."/>
            <person name="Bonacorsi S."/>
            <person name="Bouchier C."/>
            <person name="Bouvet O."/>
            <person name="Calteau A."/>
            <person name="Chiapello H."/>
            <person name="Clermont O."/>
            <person name="Cruveiller S."/>
            <person name="Danchin A."/>
            <person name="Diard M."/>
            <person name="Dossat C."/>
            <person name="Karoui M.E."/>
            <person name="Frapy E."/>
            <person name="Garry L."/>
            <person name="Ghigo J.M."/>
            <person name="Gilles A.M."/>
            <person name="Johnson J."/>
            <person name="Le Bouguenec C."/>
            <person name="Lescat M."/>
            <person name="Mangenot S."/>
            <person name="Martinez-Jehanne V."/>
            <person name="Matic I."/>
            <person name="Nassif X."/>
            <person name="Oztas S."/>
            <person name="Petit M.A."/>
            <person name="Pichon C."/>
            <person name="Rouy Z."/>
            <person name="Ruf C.S."/>
            <person name="Schneider D."/>
            <person name="Tourret J."/>
            <person name="Vacherie B."/>
            <person name="Vallenet D."/>
            <person name="Medigue C."/>
            <person name="Rocha E.P.C."/>
            <person name="Denamur E."/>
        </authorList>
    </citation>
    <scope>NUCLEOTIDE SEQUENCE [LARGE SCALE GENOMIC DNA]</scope>
    <source>
        <strain>IAI1</strain>
    </source>
</reference>